<dbReference type="EC" id="2.1.3.3" evidence="2"/>
<dbReference type="EMBL" id="CP000504">
    <property type="protein sequence ID" value="ABL88956.1"/>
    <property type="molecule type" value="Genomic_DNA"/>
</dbReference>
<dbReference type="RefSeq" id="WP_011763531.1">
    <property type="nucleotide sequence ID" value="NC_008701.1"/>
</dbReference>
<dbReference type="SMR" id="A1RVH4"/>
<dbReference type="STRING" id="384616.Pisl_1807"/>
<dbReference type="GeneID" id="4616588"/>
<dbReference type="KEGG" id="pis:Pisl_1807"/>
<dbReference type="eggNOG" id="arCOG00912">
    <property type="taxonomic scope" value="Archaea"/>
</dbReference>
<dbReference type="HOGENOM" id="CLU_043846_3_2_2"/>
<dbReference type="OrthoDB" id="4696at2157"/>
<dbReference type="UniPathway" id="UPA00068">
    <property type="reaction ID" value="UER00112"/>
</dbReference>
<dbReference type="Proteomes" id="UP000002595">
    <property type="component" value="Chromosome"/>
</dbReference>
<dbReference type="GO" id="GO:0005737">
    <property type="term" value="C:cytoplasm"/>
    <property type="evidence" value="ECO:0007669"/>
    <property type="project" value="UniProtKB-SubCell"/>
</dbReference>
<dbReference type="GO" id="GO:0016597">
    <property type="term" value="F:amino acid binding"/>
    <property type="evidence" value="ECO:0007669"/>
    <property type="project" value="InterPro"/>
</dbReference>
<dbReference type="GO" id="GO:0004585">
    <property type="term" value="F:ornithine carbamoyltransferase activity"/>
    <property type="evidence" value="ECO:0007669"/>
    <property type="project" value="UniProtKB-UniRule"/>
</dbReference>
<dbReference type="GO" id="GO:0042450">
    <property type="term" value="P:arginine biosynthetic process via ornithine"/>
    <property type="evidence" value="ECO:0007669"/>
    <property type="project" value="TreeGrafter"/>
</dbReference>
<dbReference type="GO" id="GO:0019240">
    <property type="term" value="P:citrulline biosynthetic process"/>
    <property type="evidence" value="ECO:0007669"/>
    <property type="project" value="TreeGrafter"/>
</dbReference>
<dbReference type="GO" id="GO:0006526">
    <property type="term" value="P:L-arginine biosynthetic process"/>
    <property type="evidence" value="ECO:0007669"/>
    <property type="project" value="UniProtKB-UniRule"/>
</dbReference>
<dbReference type="FunFam" id="3.40.50.1370:FF:000008">
    <property type="entry name" value="Ornithine carbamoyltransferase"/>
    <property type="match status" value="1"/>
</dbReference>
<dbReference type="Gene3D" id="3.40.50.1370">
    <property type="entry name" value="Aspartate/ornithine carbamoyltransferase"/>
    <property type="match status" value="2"/>
</dbReference>
<dbReference type="HAMAP" id="MF_01109">
    <property type="entry name" value="OTCase"/>
    <property type="match status" value="1"/>
</dbReference>
<dbReference type="InterPro" id="IPR006132">
    <property type="entry name" value="Asp/Orn_carbamoyltranf_P-bd"/>
</dbReference>
<dbReference type="InterPro" id="IPR006130">
    <property type="entry name" value="Asp/Orn_carbamoylTrfase"/>
</dbReference>
<dbReference type="InterPro" id="IPR036901">
    <property type="entry name" value="Asp/Orn_carbamoylTrfase_sf"/>
</dbReference>
<dbReference type="InterPro" id="IPR006131">
    <property type="entry name" value="Asp_carbamoyltransf_Asp/Orn-bd"/>
</dbReference>
<dbReference type="InterPro" id="IPR002292">
    <property type="entry name" value="Orn/put_carbamltrans"/>
</dbReference>
<dbReference type="InterPro" id="IPR024904">
    <property type="entry name" value="OTCase_ArgI"/>
</dbReference>
<dbReference type="NCBIfam" id="TIGR00658">
    <property type="entry name" value="orni_carb_tr"/>
    <property type="match status" value="1"/>
</dbReference>
<dbReference type="NCBIfam" id="NF001986">
    <property type="entry name" value="PRK00779.1"/>
    <property type="match status" value="1"/>
</dbReference>
<dbReference type="PANTHER" id="PTHR45753">
    <property type="entry name" value="ORNITHINE CARBAMOYLTRANSFERASE, MITOCHONDRIAL"/>
    <property type="match status" value="1"/>
</dbReference>
<dbReference type="PANTHER" id="PTHR45753:SF3">
    <property type="entry name" value="ORNITHINE TRANSCARBAMYLASE, MITOCHONDRIAL"/>
    <property type="match status" value="1"/>
</dbReference>
<dbReference type="Pfam" id="PF00185">
    <property type="entry name" value="OTCace"/>
    <property type="match status" value="1"/>
</dbReference>
<dbReference type="Pfam" id="PF02729">
    <property type="entry name" value="OTCace_N"/>
    <property type="match status" value="1"/>
</dbReference>
<dbReference type="PRINTS" id="PR00100">
    <property type="entry name" value="AOTCASE"/>
</dbReference>
<dbReference type="PRINTS" id="PR00102">
    <property type="entry name" value="OTCASE"/>
</dbReference>
<dbReference type="SUPFAM" id="SSF53671">
    <property type="entry name" value="Aspartate/ornithine carbamoyltransferase"/>
    <property type="match status" value="1"/>
</dbReference>
<dbReference type="PROSITE" id="PS00097">
    <property type="entry name" value="CARBAMOYLTRANSFERASE"/>
    <property type="match status" value="1"/>
</dbReference>
<name>OTC_PYRIL</name>
<reference key="1">
    <citation type="submission" date="2006-12" db="EMBL/GenBank/DDBJ databases">
        <title>Complete sequence of Pyrobaculum islandicum DSM 4184.</title>
        <authorList>
            <person name="Copeland A."/>
            <person name="Lucas S."/>
            <person name="Lapidus A."/>
            <person name="Barry K."/>
            <person name="Detter J.C."/>
            <person name="Glavina del Rio T."/>
            <person name="Dalin E."/>
            <person name="Tice H."/>
            <person name="Pitluck S."/>
            <person name="Meincke L."/>
            <person name="Brettin T."/>
            <person name="Bruce D."/>
            <person name="Han C."/>
            <person name="Tapia R."/>
            <person name="Gilna P."/>
            <person name="Schmutz J."/>
            <person name="Larimer F."/>
            <person name="Land M."/>
            <person name="Hauser L."/>
            <person name="Kyrpides N."/>
            <person name="Mikhailova N."/>
            <person name="Cozen A.E."/>
            <person name="Fitz-Gibbon S.T."/>
            <person name="House C.H."/>
            <person name="Saltikov C."/>
            <person name="Lowe T."/>
            <person name="Richardson P."/>
        </authorList>
    </citation>
    <scope>NUCLEOTIDE SEQUENCE [LARGE SCALE GENOMIC DNA]</scope>
    <source>
        <strain>DSM 4184 / JCM 9189 / GEO3</strain>
    </source>
</reference>
<accession>A1RVH4</accession>
<organism>
    <name type="scientific">Pyrobaculum islandicum (strain DSM 4184 / JCM 9189 / GEO3)</name>
    <dbReference type="NCBI Taxonomy" id="384616"/>
    <lineage>
        <taxon>Archaea</taxon>
        <taxon>Thermoproteota</taxon>
        <taxon>Thermoprotei</taxon>
        <taxon>Thermoproteales</taxon>
        <taxon>Thermoproteaceae</taxon>
        <taxon>Pyrobaculum</taxon>
    </lineage>
</organism>
<evidence type="ECO:0000250" key="1"/>
<evidence type="ECO:0000255" key="2">
    <source>
        <dbReference type="HAMAP-Rule" id="MF_01109"/>
    </source>
</evidence>
<proteinExistence type="inferred from homology"/>
<gene>
    <name evidence="2" type="primary">argF</name>
    <name type="ordered locus">Pisl_1807</name>
</gene>
<protein>
    <recommendedName>
        <fullName evidence="2">Ornithine carbamoyltransferase</fullName>
        <shortName evidence="2">OTCase</shortName>
        <ecNumber evidence="2">2.1.3.3</ecNumber>
    </recommendedName>
</protein>
<sequence>MRHLLTLMEYKPHEVENILRMSRDFKTRYLAGEVYTPIFPGRLVVLYFEKPSTRTRLSLTAAAAQLGMQAVYTTPSELQIGRGETIADTMRVLSRYAVAVAARVYRHETLEEMAQNSSISVINALSDKHHPLQALADALTLWEYVGKLHGIKVAFVGDVSNNVATSLAIIGAKLGWEVRLVGPKQLWNMKLVEELSEDLAKTGGRIYFTDSINDVAGVDGVYTDVWVSMGFEKEAEERRRMLKPYQVNQRVMEIAGRKAIFLHCLPAHRGEEVTDDVIDGPQSVVWDQAENRMHTAKAVFAYLLR</sequence>
<keyword id="KW-0028">Amino-acid biosynthesis</keyword>
<keyword id="KW-0055">Arginine biosynthesis</keyword>
<keyword id="KW-0963">Cytoplasm</keyword>
<keyword id="KW-0808">Transferase</keyword>
<feature type="chain" id="PRO_1000084860" description="Ornithine carbamoyltransferase">
    <location>
        <begin position="1"/>
        <end position="305"/>
    </location>
</feature>
<feature type="binding site" evidence="2">
    <location>
        <begin position="52"/>
        <end position="55"/>
    </location>
    <ligand>
        <name>carbamoyl phosphate</name>
        <dbReference type="ChEBI" id="CHEBI:58228"/>
    </ligand>
</feature>
<feature type="binding site" evidence="2">
    <location>
        <position position="79"/>
    </location>
    <ligand>
        <name>carbamoyl phosphate</name>
        <dbReference type="ChEBI" id="CHEBI:58228"/>
    </ligand>
</feature>
<feature type="binding site" evidence="2">
    <location>
        <position position="103"/>
    </location>
    <ligand>
        <name>carbamoyl phosphate</name>
        <dbReference type="ChEBI" id="CHEBI:58228"/>
    </ligand>
</feature>
<feature type="binding site" evidence="2">
    <location>
        <begin position="130"/>
        <end position="133"/>
    </location>
    <ligand>
        <name>carbamoyl phosphate</name>
        <dbReference type="ChEBI" id="CHEBI:58228"/>
    </ligand>
</feature>
<feature type="binding site" evidence="2">
    <location>
        <position position="162"/>
    </location>
    <ligand>
        <name>L-ornithine</name>
        <dbReference type="ChEBI" id="CHEBI:46911"/>
    </ligand>
</feature>
<feature type="binding site" evidence="2">
    <location>
        <position position="224"/>
    </location>
    <ligand>
        <name>L-ornithine</name>
        <dbReference type="ChEBI" id="CHEBI:46911"/>
    </ligand>
</feature>
<feature type="binding site" evidence="2">
    <location>
        <begin position="228"/>
        <end position="229"/>
    </location>
    <ligand>
        <name>L-ornithine</name>
        <dbReference type="ChEBI" id="CHEBI:46911"/>
    </ligand>
</feature>
<feature type="binding site" evidence="2">
    <location>
        <begin position="264"/>
        <end position="265"/>
    </location>
    <ligand>
        <name>carbamoyl phosphate</name>
        <dbReference type="ChEBI" id="CHEBI:58228"/>
    </ligand>
</feature>
<feature type="binding site" evidence="2">
    <location>
        <position position="292"/>
    </location>
    <ligand>
        <name>carbamoyl phosphate</name>
        <dbReference type="ChEBI" id="CHEBI:58228"/>
    </ligand>
</feature>
<comment type="function">
    <text evidence="1">Reversibly catalyzes the transfer of the carbamoyl group from carbamoyl phosphate (CP) to the N(epsilon) atom of ornithine (ORN) to produce L-citrulline.</text>
</comment>
<comment type="catalytic activity">
    <reaction evidence="2">
        <text>carbamoyl phosphate + L-ornithine = L-citrulline + phosphate + H(+)</text>
        <dbReference type="Rhea" id="RHEA:19513"/>
        <dbReference type="ChEBI" id="CHEBI:15378"/>
        <dbReference type="ChEBI" id="CHEBI:43474"/>
        <dbReference type="ChEBI" id="CHEBI:46911"/>
        <dbReference type="ChEBI" id="CHEBI:57743"/>
        <dbReference type="ChEBI" id="CHEBI:58228"/>
        <dbReference type="EC" id="2.1.3.3"/>
    </reaction>
</comment>
<comment type="pathway">
    <text evidence="2">Amino-acid biosynthesis; L-arginine biosynthesis; L-arginine from L-ornithine and carbamoyl phosphate: step 1/3.</text>
</comment>
<comment type="subcellular location">
    <subcellularLocation>
        <location evidence="2">Cytoplasm</location>
    </subcellularLocation>
</comment>
<comment type="similarity">
    <text evidence="2">Belongs to the aspartate/ornithine carbamoyltransferase superfamily. OTCase family.</text>
</comment>